<comment type="function">
    <text evidence="2">Involved in mitotic DNA repair and meiotic recombination. Functions in the recombinational DNA repair pathway. Essential for interhomolog gene conversion (GC), but may have a less important role in intersister GC than spn-A/Rad51. In the presence of DNA, spn-A/Rad51 enhances the ATPase activity of okr/Rad54 (By similarity).</text>
</comment>
<comment type="subunit">
    <text evidence="1">Interacts (via N-terminus) with spn-A/Rad51.</text>
</comment>
<comment type="subcellular location">
    <subcellularLocation>
        <location evidence="2">Nucleus</location>
    </subcellularLocation>
</comment>
<comment type="similarity">
    <text evidence="3">Belongs to the SNF2/RAD54 helicase family.</text>
</comment>
<evidence type="ECO:0000250" key="1"/>
<evidence type="ECO:0000250" key="2">
    <source>
        <dbReference type="UniProtKB" id="O76460"/>
    </source>
</evidence>
<evidence type="ECO:0000255" key="3"/>
<evidence type="ECO:0000255" key="4">
    <source>
        <dbReference type="PROSITE-ProRule" id="PRU00541"/>
    </source>
</evidence>
<evidence type="ECO:0000255" key="5">
    <source>
        <dbReference type="PROSITE-ProRule" id="PRU00542"/>
    </source>
</evidence>
<evidence type="ECO:0000256" key="6">
    <source>
        <dbReference type="SAM" id="MobiDB-lite"/>
    </source>
</evidence>
<evidence type="ECO:0000312" key="7">
    <source>
        <dbReference type="EMBL" id="EDW76660.1"/>
    </source>
</evidence>
<name>RAD54_DROWI</name>
<accession>B4MX21</accession>
<protein>
    <recommendedName>
        <fullName evidence="2">DNA repair and recombination protein RAD54-like</fullName>
        <ecNumber>3.6.4.-</ecNumber>
    </recommendedName>
    <alternativeName>
        <fullName evidence="2">Protein okra</fullName>
    </alternativeName>
</protein>
<feature type="chain" id="PRO_0000392527" description="DNA repair and recombination protein RAD54-like">
    <location>
        <begin position="1"/>
        <end position="784"/>
    </location>
</feature>
<feature type="domain" description="Helicase ATP-binding" evidence="4">
    <location>
        <begin position="169"/>
        <end position="344"/>
    </location>
</feature>
<feature type="domain" description="Helicase C-terminal" evidence="5">
    <location>
        <begin position="501"/>
        <end position="658"/>
    </location>
</feature>
<feature type="region of interest" description="Required for chromatin remodeling, strand pairing activities and coupling of ATPase activity" evidence="2">
    <location>
        <begin position="2"/>
        <end position="9"/>
    </location>
</feature>
<feature type="region of interest" description="Disordered" evidence="6">
    <location>
        <begin position="742"/>
        <end position="784"/>
    </location>
</feature>
<feature type="short sequence motif" description="DEGH box" evidence="3">
    <location>
        <begin position="295"/>
        <end position="298"/>
    </location>
</feature>
<feature type="compositionally biased region" description="Basic and acidic residues" evidence="6">
    <location>
        <begin position="745"/>
        <end position="754"/>
    </location>
</feature>
<feature type="binding site" evidence="4">
    <location>
        <begin position="182"/>
        <end position="189"/>
    </location>
    <ligand>
        <name>ATP</name>
        <dbReference type="ChEBI" id="CHEBI:30616"/>
    </ligand>
</feature>
<feature type="modified residue" description="Phosphothreonine" evidence="2">
    <location>
        <position position="22"/>
    </location>
</feature>
<keyword id="KW-0067">ATP-binding</keyword>
<keyword id="KW-0131">Cell cycle</keyword>
<keyword id="KW-0132">Cell division</keyword>
<keyword id="KW-0227">DNA damage</keyword>
<keyword id="KW-0234">DNA repair</keyword>
<keyword id="KW-0238">DNA-binding</keyword>
<keyword id="KW-0347">Helicase</keyword>
<keyword id="KW-0378">Hydrolase</keyword>
<keyword id="KW-0469">Meiosis</keyword>
<keyword id="KW-0498">Mitosis</keyword>
<keyword id="KW-0547">Nucleotide-binding</keyword>
<keyword id="KW-0539">Nucleus</keyword>
<keyword id="KW-0597">Phosphoprotein</keyword>
<keyword id="KW-1185">Reference proteome</keyword>
<sequence>MRRSLAPSQRLGVRLQPNQEFTPPLLQKKNKRTCQQEQEQLQCQFALRDATNSNGSIPLPIRFTANSEYELAIAKVLARKFKVPIANYVPDYGGNRCLGVRRSIVRRALHDPQACNALVLYTPPVYSEHERMKMDPTKILVHVVVDPLLSNILRPHQREGVRFMYDCVEGKKGNFNGCIMADEMGLGKTLQCVTLVWTLLRQSCECKPTITKAIIVSPSSLVKNWEKEFTKWLHGRMHCLAMEGGSKEDTIKALEQFSMNTSTRLGTPVLLISYETFRIYANILCQNEVGMVICDEGHRLKNSDNLTYQALMGLKTKRRVLLSGTPIQNDLTEYFSLVNFVNPEMLGTAADFKRNFENPILKGQNTDSSDKERERALEKTQELIGLVNQCIIRRTNQILTKYLPVKFEMVICVRLTSVQLEFYTNFLKSDKVRRSLADCNEKASLTALADITTLKKLCSHPDLIYEKMLARDKGFENSQNILPTNYKPKDLNPELSGKFMLLDFMLATIRANSDDKVVLISNYTQTLDLFEQLARKRKYTFVRLDGTMTIKKRSKVVDRFNDPENDCFLFMLSSKAGGCGLNLIGANRLFMFDPDWNPANDEQAMARVWRDGQKKPCYIYRLVASGSIEEKILQRQTHKKSLSSTIIDNNESAEKHFTRDDLKDLFSFDSKILSDTHEKLKCKRCLQNVQTKPPPEDTDCTSHLSQWFHCSNNRGLPDDILAQAWTASKCVSFVFHHRSQAQAIKESEETKQEAEDTSIPAKSKRKRSTTPESDDCNDEDFKGF</sequence>
<proteinExistence type="inferred from homology"/>
<gene>
    <name evidence="2" type="primary">okr</name>
    <name type="ORF">GK15573</name>
</gene>
<dbReference type="EC" id="3.6.4.-"/>
<dbReference type="EMBL" id="CH963857">
    <property type="protein sequence ID" value="EDW76660.1"/>
    <property type="molecule type" value="Genomic_DNA"/>
</dbReference>
<dbReference type="SMR" id="B4MX21"/>
<dbReference type="STRING" id="7260.B4MX21"/>
<dbReference type="EnsemblMetazoa" id="FBtr0246224">
    <property type="protein sequence ID" value="FBpp0244716"/>
    <property type="gene ID" value="FBgn0217578"/>
</dbReference>
<dbReference type="EnsemblMetazoa" id="XM_002065638.4">
    <property type="protein sequence ID" value="XP_002065674.1"/>
    <property type="gene ID" value="LOC6642593"/>
</dbReference>
<dbReference type="GeneID" id="6642593"/>
<dbReference type="KEGG" id="dwi:6642593"/>
<dbReference type="CTD" id="33507"/>
<dbReference type="eggNOG" id="KOG0390">
    <property type="taxonomic scope" value="Eukaryota"/>
</dbReference>
<dbReference type="HOGENOM" id="CLU_000315_10_2_1"/>
<dbReference type="OMA" id="YTEHERM"/>
<dbReference type="OrthoDB" id="413460at2759"/>
<dbReference type="PhylomeDB" id="B4MX21"/>
<dbReference type="ChiTaRS" id="okr">
    <property type="organism name" value="fly"/>
</dbReference>
<dbReference type="Proteomes" id="UP000007798">
    <property type="component" value="Unassembled WGS sequence"/>
</dbReference>
<dbReference type="GO" id="GO:0005634">
    <property type="term" value="C:nucleus"/>
    <property type="evidence" value="ECO:0000250"/>
    <property type="project" value="UniProtKB"/>
</dbReference>
<dbReference type="GO" id="GO:0005524">
    <property type="term" value="F:ATP binding"/>
    <property type="evidence" value="ECO:0007669"/>
    <property type="project" value="UniProtKB-KW"/>
</dbReference>
<dbReference type="GO" id="GO:0016887">
    <property type="term" value="F:ATP hydrolysis activity"/>
    <property type="evidence" value="ECO:0007669"/>
    <property type="project" value="EnsemblMetazoa"/>
</dbReference>
<dbReference type="GO" id="GO:0140658">
    <property type="term" value="F:ATP-dependent chromatin remodeler activity"/>
    <property type="evidence" value="ECO:0007669"/>
    <property type="project" value="EnsemblMetazoa"/>
</dbReference>
<dbReference type="GO" id="GO:0003677">
    <property type="term" value="F:DNA binding"/>
    <property type="evidence" value="ECO:0007669"/>
    <property type="project" value="UniProtKB-KW"/>
</dbReference>
<dbReference type="GO" id="GO:0015616">
    <property type="term" value="F:DNA translocase activity"/>
    <property type="evidence" value="ECO:0007669"/>
    <property type="project" value="TreeGrafter"/>
</dbReference>
<dbReference type="GO" id="GO:0004386">
    <property type="term" value="F:helicase activity"/>
    <property type="evidence" value="ECO:0007669"/>
    <property type="project" value="UniProtKB-KW"/>
</dbReference>
<dbReference type="GO" id="GO:0051301">
    <property type="term" value="P:cell division"/>
    <property type="evidence" value="ECO:0007669"/>
    <property type="project" value="UniProtKB-KW"/>
</dbReference>
<dbReference type="GO" id="GO:0006338">
    <property type="term" value="P:chromatin remodeling"/>
    <property type="evidence" value="ECO:0000250"/>
    <property type="project" value="UniProtKB"/>
</dbReference>
<dbReference type="GO" id="GO:0043150">
    <property type="term" value="P:DNA synthesis involved in double-strand break repair via homologous recombination"/>
    <property type="evidence" value="ECO:0000250"/>
    <property type="project" value="UniProtKB"/>
</dbReference>
<dbReference type="GO" id="GO:0000724">
    <property type="term" value="P:double-strand break repair via homologous recombination"/>
    <property type="evidence" value="ECO:0000250"/>
    <property type="project" value="UniProtKB"/>
</dbReference>
<dbReference type="GO" id="GO:0045003">
    <property type="term" value="P:double-strand break repair via synthesis-dependent strand annealing"/>
    <property type="evidence" value="ECO:0007669"/>
    <property type="project" value="EnsemblMetazoa"/>
</dbReference>
<dbReference type="GO" id="GO:0000711">
    <property type="term" value="P:meiotic DNA repair synthesis"/>
    <property type="evidence" value="ECO:0000250"/>
    <property type="project" value="UniProtKB"/>
</dbReference>
<dbReference type="GO" id="GO:0030716">
    <property type="term" value="P:oocyte fate determination"/>
    <property type="evidence" value="ECO:0007669"/>
    <property type="project" value="EnsemblMetazoa"/>
</dbReference>
<dbReference type="GO" id="GO:0048477">
    <property type="term" value="P:oogenesis"/>
    <property type="evidence" value="ECO:0007669"/>
    <property type="project" value="EnsemblMetazoa"/>
</dbReference>
<dbReference type="GO" id="GO:0007131">
    <property type="term" value="P:reciprocal meiotic recombination"/>
    <property type="evidence" value="ECO:0007669"/>
    <property type="project" value="EnsemblMetazoa"/>
</dbReference>
<dbReference type="GO" id="GO:0010212">
    <property type="term" value="P:response to ionizing radiation"/>
    <property type="evidence" value="ECO:0000250"/>
    <property type="project" value="UniProtKB"/>
</dbReference>
<dbReference type="CDD" id="cd18067">
    <property type="entry name" value="DEXHc_RAD54A"/>
    <property type="match status" value="1"/>
</dbReference>
<dbReference type="CDD" id="cd18793">
    <property type="entry name" value="SF2_C_SNF"/>
    <property type="match status" value="1"/>
</dbReference>
<dbReference type="FunFam" id="3.40.50.10810:FF:000010">
    <property type="entry name" value="DNA repair and recombination protein RAD54-like"/>
    <property type="match status" value="1"/>
</dbReference>
<dbReference type="FunFam" id="3.40.50.300:FF:000332">
    <property type="entry name" value="DNA repair and recombination protein RAD54-like"/>
    <property type="match status" value="1"/>
</dbReference>
<dbReference type="Gene3D" id="3.40.50.300">
    <property type="entry name" value="P-loop containing nucleotide triphosphate hydrolases"/>
    <property type="match status" value="1"/>
</dbReference>
<dbReference type="Gene3D" id="1.20.120.850">
    <property type="entry name" value="SWI2/SNF2 ATPases, N-terminal domain"/>
    <property type="match status" value="1"/>
</dbReference>
<dbReference type="Gene3D" id="3.40.50.10810">
    <property type="entry name" value="Tandem AAA-ATPase domain"/>
    <property type="match status" value="1"/>
</dbReference>
<dbReference type="InterPro" id="IPR014001">
    <property type="entry name" value="Helicase_ATP-bd"/>
</dbReference>
<dbReference type="InterPro" id="IPR001650">
    <property type="entry name" value="Helicase_C-like"/>
</dbReference>
<dbReference type="InterPro" id="IPR027417">
    <property type="entry name" value="P-loop_NTPase"/>
</dbReference>
<dbReference type="InterPro" id="IPR013967">
    <property type="entry name" value="Rad54_N"/>
</dbReference>
<dbReference type="InterPro" id="IPR038718">
    <property type="entry name" value="SNF2-like_sf"/>
</dbReference>
<dbReference type="InterPro" id="IPR049730">
    <property type="entry name" value="SNF2/RAD54-like_C"/>
</dbReference>
<dbReference type="InterPro" id="IPR000330">
    <property type="entry name" value="SNF2_N"/>
</dbReference>
<dbReference type="InterPro" id="IPR050496">
    <property type="entry name" value="SNF2_RAD54_helicase_repair"/>
</dbReference>
<dbReference type="PANTHER" id="PTHR45629:SF7">
    <property type="entry name" value="DNA EXCISION REPAIR PROTEIN ERCC-6-RELATED"/>
    <property type="match status" value="1"/>
</dbReference>
<dbReference type="PANTHER" id="PTHR45629">
    <property type="entry name" value="SNF2/RAD54 FAMILY MEMBER"/>
    <property type="match status" value="1"/>
</dbReference>
<dbReference type="Pfam" id="PF00271">
    <property type="entry name" value="Helicase_C"/>
    <property type="match status" value="1"/>
</dbReference>
<dbReference type="Pfam" id="PF08658">
    <property type="entry name" value="Rad54_N"/>
    <property type="match status" value="1"/>
</dbReference>
<dbReference type="Pfam" id="PF00176">
    <property type="entry name" value="SNF2-rel_dom"/>
    <property type="match status" value="1"/>
</dbReference>
<dbReference type="SMART" id="SM00487">
    <property type="entry name" value="DEXDc"/>
    <property type="match status" value="1"/>
</dbReference>
<dbReference type="SMART" id="SM00490">
    <property type="entry name" value="HELICc"/>
    <property type="match status" value="1"/>
</dbReference>
<dbReference type="SUPFAM" id="SSF52540">
    <property type="entry name" value="P-loop containing nucleoside triphosphate hydrolases"/>
    <property type="match status" value="2"/>
</dbReference>
<dbReference type="PROSITE" id="PS51192">
    <property type="entry name" value="HELICASE_ATP_BIND_1"/>
    <property type="match status" value="1"/>
</dbReference>
<dbReference type="PROSITE" id="PS51194">
    <property type="entry name" value="HELICASE_CTER"/>
    <property type="match status" value="1"/>
</dbReference>
<organism>
    <name type="scientific">Drosophila willistoni</name>
    <name type="common">Fruit fly</name>
    <dbReference type="NCBI Taxonomy" id="7260"/>
    <lineage>
        <taxon>Eukaryota</taxon>
        <taxon>Metazoa</taxon>
        <taxon>Ecdysozoa</taxon>
        <taxon>Arthropoda</taxon>
        <taxon>Hexapoda</taxon>
        <taxon>Insecta</taxon>
        <taxon>Pterygota</taxon>
        <taxon>Neoptera</taxon>
        <taxon>Endopterygota</taxon>
        <taxon>Diptera</taxon>
        <taxon>Brachycera</taxon>
        <taxon>Muscomorpha</taxon>
        <taxon>Ephydroidea</taxon>
        <taxon>Drosophilidae</taxon>
        <taxon>Drosophila</taxon>
        <taxon>Sophophora</taxon>
    </lineage>
</organism>
<reference evidence="7" key="1">
    <citation type="journal article" date="2007" name="Nature">
        <title>Evolution of genes and genomes on the Drosophila phylogeny.</title>
        <authorList>
            <consortium name="Drosophila 12 genomes consortium"/>
        </authorList>
    </citation>
    <scope>NUCLEOTIDE SEQUENCE [LARGE SCALE GENOMIC DNA]</scope>
    <source>
        <strain evidence="7">Tucson 14030-0811.24</strain>
    </source>
</reference>